<keyword id="KW-1185">Reference proteome</keyword>
<feature type="chain" id="PRO_0000132970" description="Uncharacterized 54.7 kDa protein in IAP1-SOD intergenic region">
    <location>
        <begin position="1"/>
        <end position="463"/>
    </location>
</feature>
<feature type="sequence conflict" description="In Ref. 2; AAA66798." evidence="1" ref="2">
    <original>AYYIRHMFA</original>
    <variation>GTTLDTCLL</variation>
    <location>
        <begin position="254"/>
        <end position="262"/>
    </location>
</feature>
<accession>P41434</accession>
<organismHost>
    <name type="scientific">Lepidoptera</name>
    <name type="common">butterflies and moths</name>
    <dbReference type="NCBI Taxonomy" id="7088"/>
</organismHost>
<organism>
    <name type="scientific">Autographa californica nuclear polyhedrosis virus</name>
    <name type="common">AcMNPV</name>
    <dbReference type="NCBI Taxonomy" id="46015"/>
    <lineage>
        <taxon>Viruses</taxon>
        <taxon>Viruses incertae sedis</taxon>
        <taxon>Naldaviricetes</taxon>
        <taxon>Lefavirales</taxon>
        <taxon>Baculoviridae</taxon>
        <taxon>Alphabaculovirus</taxon>
        <taxon>Alphabaculovirus aucalifornicae</taxon>
    </lineage>
</organism>
<name>Y030_NPVAC</name>
<dbReference type="EMBL" id="L22858">
    <property type="protein sequence ID" value="AAA66660.1"/>
    <property type="molecule type" value="Genomic_DNA"/>
</dbReference>
<dbReference type="EMBL" id="M96361">
    <property type="protein sequence ID" value="AAA66798.1"/>
    <property type="status" value="ALT_FRAME"/>
    <property type="molecule type" value="Genomic_DNA"/>
</dbReference>
<dbReference type="PIR" id="F36828">
    <property type="entry name" value="F36828"/>
</dbReference>
<dbReference type="PIR" id="F72853">
    <property type="entry name" value="F72853"/>
</dbReference>
<dbReference type="RefSeq" id="NP_054059.1">
    <property type="nucleotide sequence ID" value="NC_001623.1"/>
</dbReference>
<dbReference type="GeneID" id="1403862"/>
<dbReference type="KEGG" id="vg:1403862"/>
<dbReference type="OrthoDB" id="2950at10239"/>
<dbReference type="Proteomes" id="UP000008292">
    <property type="component" value="Segment"/>
</dbReference>
<evidence type="ECO:0000305" key="1"/>
<reference key="1">
    <citation type="journal article" date="1994" name="Virology">
        <title>The complete DNA sequence of Autographa californica nuclear polyhedrosis virus.</title>
        <authorList>
            <person name="Ayres M.D."/>
            <person name="Howard S.C."/>
            <person name="Kuzio J."/>
            <person name="Lopez-Ferber M."/>
            <person name="Possee R.D."/>
        </authorList>
    </citation>
    <scope>NUCLEOTIDE SEQUENCE [LARGE SCALE GENOMIC DNA]</scope>
    <source>
        <strain>C6</strain>
    </source>
</reference>
<reference key="2">
    <citation type="journal article" date="1992" name="Virology">
        <title>Sequence, genomic organization of the EcoRI-A fragment of Autographa californica nuclear polyhedrosis virus, and identification of a viral-encoded protein resembling the outer capsid protein VP8 of rotavirus.</title>
        <authorList>
            <person name="Braunagel S.C."/>
            <person name="Daniel K.D."/>
            <person name="Reilly L.M."/>
            <person name="Guarino L.A."/>
            <person name="Hong T."/>
            <person name="Summers M.D."/>
        </authorList>
    </citation>
    <scope>NUCLEOTIDE SEQUENCE [GENOMIC DNA]</scope>
    <source>
        <strain>E2</strain>
    </source>
</reference>
<protein>
    <recommendedName>
        <fullName>Uncharacterized 54.7 kDa protein in IAP1-SOD intergenic region</fullName>
    </recommendedName>
    <alternativeName>
        <fullName>ORF15</fullName>
    </alternativeName>
</protein>
<comment type="sequence caution" evidence="1">
    <conflict type="frameshift">
        <sequence resource="EMBL-CDS" id="AAA66798"/>
    </conflict>
</comment>
<proteinExistence type="predicted"/>
<sequence length="463" mass="54689">MAPTQVLQRALKQKEYIKIIELAVKSPNNRVYLLNLQDDTFWKRISRECYGRVDFIHVFRNKLDWKIISISPLSITIANRFKSHLIWSLVSEQKFLTQDFILAFGDLLDMEEISKNYNNLSLSVQQKYAHKLNWKRIVASHILLKEWFQEPIKQYINYDYVSKYKHLNTALINNVSCMENVNLSAYMQDCVKISDALILYCLREGRVQELKLIAHSIPWSDHMLVFDEYPGLVNTLHSDWKCIDKWTAFNAPPAYYIRHMFAHPEFRNEFEENFNAQYWHKLINYTVITNVRASAAFNLMLFQNYKNRVDWTELQQCNQFLNLGVLYRAPFPRVDLQAVPRFDDEKLWKAYGRHLKLNSDECDDPQVIPLHMNVKTAYHKMILVEPCATQQEHDSVETCSAIFKLNGGEEGLLNWNLLSATQPICPFNLRHLQNVNANTYRNKNNHFMEDVYEQMVAIQMNNN</sequence>